<sequence length="593" mass="65854">MATEGKNPINMNSMSSSLARTGQWVFSQDIPTDVVVEVGEANFSLHKFMLVAKSNYIRKLIMESKDSDVTRINLSDIPGGPEIFEKAAKFCYGVNFEITVQNVAALHCAAEFLQMTDKYCDNNLAGRTQDFLSQVALSSLSGAIVVLKSCEILLPISRDLGIVRRCVDVVGAKACNEAMFPCRTPPNWWTEELCILDVDFFSDVVSSMKQRGVKPSSLASAIITYTEKSLRDLVRDHSGRGVKYSDPGDNESDERSQQRDLVQSIVSLLPSDKGLFPVNFLCSLLRCAVFLDTSLTCKNELEKRISVVLEHVSVDDLLIPSFTYDGERLLDLDSVRRIISAFVEKEKNVGVFNGGDFNRGVCSVSLQRVAKTVDSYLAEIATYGDLTISKFNAIANLVPKSARKSDDDLYRAIDIFLKAHPNLDEIEREKVCSSMDPLKLSYDARLHASQNKRLPVNIVLHALYYDQLKLRSGVAEQEERAVVVLPEALKTRSQLQADTTLAKENEALRSELMKMKMYVSDMQKNKNGAGASSSNSSSLVSSKKSKHTFFSSVSKKLGKLNPFKNGSKDTSHIDEDLGGVDITKPRRRRFSIS</sequence>
<organism>
    <name type="scientific">Arabidopsis thaliana</name>
    <name type="common">Mouse-ear cress</name>
    <dbReference type="NCBI Taxonomy" id="3702"/>
    <lineage>
        <taxon>Eukaryota</taxon>
        <taxon>Viridiplantae</taxon>
        <taxon>Streptophyta</taxon>
        <taxon>Embryophyta</taxon>
        <taxon>Tracheophyta</taxon>
        <taxon>Spermatophyta</taxon>
        <taxon>Magnoliopsida</taxon>
        <taxon>eudicotyledons</taxon>
        <taxon>Gunneridae</taxon>
        <taxon>Pentapetalae</taxon>
        <taxon>rosids</taxon>
        <taxon>malvids</taxon>
        <taxon>Brassicales</taxon>
        <taxon>Brassicaceae</taxon>
        <taxon>Camelineae</taxon>
        <taxon>Arabidopsis</taxon>
    </lineage>
</organism>
<reference key="1">
    <citation type="journal article" date="2000" name="Plant Cell">
        <title>RPT2: a signal transducer of the phototropic response in Arabidopsis.</title>
        <authorList>
            <person name="Sakai T."/>
            <person name="Wada T."/>
            <person name="Ishiguro S."/>
            <person name="Okada K."/>
        </authorList>
    </citation>
    <scope>NUCLEOTIDE SEQUENCE [MRNA]</scope>
    <scope>FUNCTION</scope>
    <scope>INDUCTION</scope>
</reference>
<reference key="2">
    <citation type="journal article" date="1999" name="Nature">
        <title>Sequence and analysis of chromosome 2 of the plant Arabidopsis thaliana.</title>
        <authorList>
            <person name="Lin X."/>
            <person name="Kaul S."/>
            <person name="Rounsley S.D."/>
            <person name="Shea T.P."/>
            <person name="Benito M.-I."/>
            <person name="Town C.D."/>
            <person name="Fujii C.Y."/>
            <person name="Mason T.M."/>
            <person name="Bowman C.L."/>
            <person name="Barnstead M.E."/>
            <person name="Feldblyum T.V."/>
            <person name="Buell C.R."/>
            <person name="Ketchum K.A."/>
            <person name="Lee J.J."/>
            <person name="Ronning C.M."/>
            <person name="Koo H.L."/>
            <person name="Moffat K.S."/>
            <person name="Cronin L.A."/>
            <person name="Shen M."/>
            <person name="Pai G."/>
            <person name="Van Aken S."/>
            <person name="Umayam L."/>
            <person name="Tallon L.J."/>
            <person name="Gill J.E."/>
            <person name="Adams M.D."/>
            <person name="Carrera A.J."/>
            <person name="Creasy T.H."/>
            <person name="Goodman H.M."/>
            <person name="Somerville C.R."/>
            <person name="Copenhaver G.P."/>
            <person name="Preuss D."/>
            <person name="Nierman W.C."/>
            <person name="White O."/>
            <person name="Eisen J.A."/>
            <person name="Salzberg S.L."/>
            <person name="Fraser C.M."/>
            <person name="Venter J.C."/>
        </authorList>
    </citation>
    <scope>NUCLEOTIDE SEQUENCE [LARGE SCALE GENOMIC DNA]</scope>
    <source>
        <strain>cv. Columbia</strain>
    </source>
</reference>
<reference key="3">
    <citation type="journal article" date="2017" name="Plant J.">
        <title>Araport11: a complete reannotation of the Arabidopsis thaliana reference genome.</title>
        <authorList>
            <person name="Cheng C.Y."/>
            <person name="Krishnakumar V."/>
            <person name="Chan A.P."/>
            <person name="Thibaud-Nissen F."/>
            <person name="Schobel S."/>
            <person name="Town C.D."/>
        </authorList>
    </citation>
    <scope>GENOME REANNOTATION</scope>
    <source>
        <strain>cv. Columbia</strain>
    </source>
</reference>
<reference key="4">
    <citation type="journal article" date="2003" name="Science">
        <title>Empirical analysis of transcriptional activity in the Arabidopsis genome.</title>
        <authorList>
            <person name="Yamada K."/>
            <person name="Lim J."/>
            <person name="Dale J.M."/>
            <person name="Chen H."/>
            <person name="Shinn P."/>
            <person name="Palm C.J."/>
            <person name="Southwick A.M."/>
            <person name="Wu H.C."/>
            <person name="Kim C.J."/>
            <person name="Nguyen M."/>
            <person name="Pham P.K."/>
            <person name="Cheuk R.F."/>
            <person name="Karlin-Newmann G."/>
            <person name="Liu S.X."/>
            <person name="Lam B."/>
            <person name="Sakano H."/>
            <person name="Wu T."/>
            <person name="Yu G."/>
            <person name="Miranda M."/>
            <person name="Quach H.L."/>
            <person name="Tripp M."/>
            <person name="Chang C.H."/>
            <person name="Lee J.M."/>
            <person name="Toriumi M.J."/>
            <person name="Chan M.M."/>
            <person name="Tang C.C."/>
            <person name="Onodera C.S."/>
            <person name="Deng J.M."/>
            <person name="Akiyama K."/>
            <person name="Ansari Y."/>
            <person name="Arakawa T."/>
            <person name="Banh J."/>
            <person name="Banno F."/>
            <person name="Bowser L."/>
            <person name="Brooks S.Y."/>
            <person name="Carninci P."/>
            <person name="Chao Q."/>
            <person name="Choy N."/>
            <person name="Enju A."/>
            <person name="Goldsmith A.D."/>
            <person name="Gurjal M."/>
            <person name="Hansen N.F."/>
            <person name="Hayashizaki Y."/>
            <person name="Johnson-Hopson C."/>
            <person name="Hsuan V.W."/>
            <person name="Iida K."/>
            <person name="Karnes M."/>
            <person name="Khan S."/>
            <person name="Koesema E."/>
            <person name="Ishida J."/>
            <person name="Jiang P.X."/>
            <person name="Jones T."/>
            <person name="Kawai J."/>
            <person name="Kamiya A."/>
            <person name="Meyers C."/>
            <person name="Nakajima M."/>
            <person name="Narusaka M."/>
            <person name="Seki M."/>
            <person name="Sakurai T."/>
            <person name="Satou M."/>
            <person name="Tamse R."/>
            <person name="Vaysberg M."/>
            <person name="Wallender E.K."/>
            <person name="Wong C."/>
            <person name="Yamamura Y."/>
            <person name="Yuan S."/>
            <person name="Shinozaki K."/>
            <person name="Davis R.W."/>
            <person name="Theologis A."/>
            <person name="Ecker J.R."/>
        </authorList>
    </citation>
    <scope>NUCLEOTIDE SEQUENCE [LARGE SCALE MRNA]</scope>
    <source>
        <strain>cv. Columbia</strain>
    </source>
</reference>
<reference key="5">
    <citation type="submission" date="2006-07" db="EMBL/GenBank/DDBJ databases">
        <title>Large-scale analysis of RIKEN Arabidopsis full-length (RAFL) cDNAs.</title>
        <authorList>
            <person name="Totoki Y."/>
            <person name="Seki M."/>
            <person name="Ishida J."/>
            <person name="Nakajima M."/>
            <person name="Enju A."/>
            <person name="Kamiya A."/>
            <person name="Narusaka M."/>
            <person name="Shin-i T."/>
            <person name="Nakagawa M."/>
            <person name="Sakamoto N."/>
            <person name="Oishi K."/>
            <person name="Kohara Y."/>
            <person name="Kobayashi M."/>
            <person name="Toyoda A."/>
            <person name="Sakaki Y."/>
            <person name="Sakurai T."/>
            <person name="Iida K."/>
            <person name="Akiyama K."/>
            <person name="Satou M."/>
            <person name="Toyoda T."/>
            <person name="Konagaya A."/>
            <person name="Carninci P."/>
            <person name="Kawai J."/>
            <person name="Hayashizaki Y."/>
            <person name="Shinozaki K."/>
        </authorList>
    </citation>
    <scope>NUCLEOTIDE SEQUENCE [LARGE SCALE MRNA]</scope>
    <source>
        <strain>cv. Columbia</strain>
    </source>
</reference>
<reference key="6">
    <citation type="journal article" date="2004" name="Plant Cell">
        <title>RPT2 is a signal transducer involved in phototropic response and stomatal opening by association with phototropin 1 in Arabidopsis thaliana.</title>
        <authorList>
            <person name="Inada S."/>
            <person name="Ohgishi M."/>
            <person name="Mayama T."/>
            <person name="Okada K."/>
            <person name="Sakai T."/>
        </authorList>
    </citation>
    <scope>FUNCTION</scope>
    <scope>TISSUE SPECIFICITY</scope>
    <scope>INTERACTION WITH PHOT1 AND RPT3</scope>
</reference>
<reference key="7">
    <citation type="journal article" date="2005" name="J. Biol. Chem.">
        <title>Cullins 3a and 3b assemble with members of the broad complex/tramtrack/bric-a-brac (BTB) protein family to form essential ubiquitin-protein ligases (E3s) in Arabidopsis.</title>
        <authorList>
            <person name="Gingerich D.J."/>
            <person name="Gagne J.M."/>
            <person name="Salter D.W."/>
            <person name="Hellmann H."/>
            <person name="Estelle M."/>
            <person name="Ma L."/>
            <person name="Vierstra R.D."/>
        </authorList>
    </citation>
    <scope>DOMAIN BTB</scope>
</reference>
<reference key="8">
    <citation type="journal article" date="2010" name="Plant J.">
        <title>Role of the phytochrome and cryptochrome signaling pathways in hypocotyl phototropism.</title>
        <authorList>
            <person name="Tsuchida-Mayama T."/>
            <person name="Sakai T."/>
            <person name="Hanada A."/>
            <person name="Uehara Y."/>
            <person name="Asami T."/>
            <person name="Yamaguchi S."/>
        </authorList>
    </citation>
    <scope>INDUCTION</scope>
    <scope>FUNCTION</scope>
</reference>
<proteinExistence type="evidence at protein level"/>
<accession>Q682S0</accession>
<accession>O04343</accession>
<accession>O04344</accession>
<accession>Q0WKX4</accession>
<accession>Q93VA6</accession>
<accession>Q9M6N8</accession>
<name>RPT2_ARATH</name>
<protein>
    <recommendedName>
        <fullName>Root phototropism protein 2</fullName>
    </recommendedName>
    <alternativeName>
        <fullName>BTB/POZ domain-containing protein RPT2</fullName>
    </alternativeName>
</protein>
<keyword id="KW-0025">Alternative splicing</keyword>
<keyword id="KW-0597">Phosphoprotein</keyword>
<keyword id="KW-1185">Reference proteome</keyword>
<keyword id="KW-0807">Transducer</keyword>
<keyword id="KW-0833">Ubl conjugation pathway</keyword>
<evidence type="ECO:0000250" key="1"/>
<evidence type="ECO:0000250" key="2">
    <source>
        <dbReference type="UniProtKB" id="Q9FMF5"/>
    </source>
</evidence>
<evidence type="ECO:0000255" key="3">
    <source>
        <dbReference type="PROSITE-ProRule" id="PRU00037"/>
    </source>
</evidence>
<evidence type="ECO:0000255" key="4">
    <source>
        <dbReference type="PROSITE-ProRule" id="PRU00982"/>
    </source>
</evidence>
<evidence type="ECO:0000269" key="5">
    <source>
    </source>
</evidence>
<evidence type="ECO:0000269" key="6">
    <source>
    </source>
</evidence>
<evidence type="ECO:0000269" key="7">
    <source>
    </source>
</evidence>
<evidence type="ECO:0000269" key="8">
    <source>
    </source>
</evidence>
<evidence type="ECO:0000305" key="9"/>
<gene>
    <name type="primary">RPT2</name>
    <name type="ordered locus">At2g30520/At2g30510</name>
    <name type="ORF">T6B20.13/T6B20.14</name>
</gene>
<dbReference type="EMBL" id="AF181683">
    <property type="protein sequence ID" value="AAF33112.1"/>
    <property type="molecule type" value="mRNA"/>
</dbReference>
<dbReference type="EMBL" id="U93215">
    <property type="protein sequence ID" value="AAB63085.1"/>
    <property type="status" value="ALT_SEQ"/>
    <property type="molecule type" value="Genomic_DNA"/>
</dbReference>
<dbReference type="EMBL" id="U93215">
    <property type="protein sequence ID" value="AAB63086.1"/>
    <property type="status" value="ALT_SEQ"/>
    <property type="molecule type" value="Genomic_DNA"/>
</dbReference>
<dbReference type="EMBL" id="CP002685">
    <property type="protein sequence ID" value="AEC08401.1"/>
    <property type="molecule type" value="Genomic_DNA"/>
</dbReference>
<dbReference type="EMBL" id="AY035063">
    <property type="protein sequence ID" value="AAK59568.1"/>
    <property type="molecule type" value="mRNA"/>
</dbReference>
<dbReference type="EMBL" id="AY056359">
    <property type="protein sequence ID" value="AAL07245.1"/>
    <property type="molecule type" value="mRNA"/>
</dbReference>
<dbReference type="EMBL" id="BT000675">
    <property type="protein sequence ID" value="AAN31821.1"/>
    <property type="molecule type" value="mRNA"/>
</dbReference>
<dbReference type="EMBL" id="AK175297">
    <property type="protein sequence ID" value="BAD43060.1"/>
    <property type="status" value="ALT_SEQ"/>
    <property type="molecule type" value="mRNA"/>
</dbReference>
<dbReference type="EMBL" id="AK221310">
    <property type="protein sequence ID" value="BAD94074.1"/>
    <property type="molecule type" value="mRNA"/>
</dbReference>
<dbReference type="EMBL" id="AK221993">
    <property type="protein sequence ID" value="BAD94572.1"/>
    <property type="molecule type" value="mRNA"/>
</dbReference>
<dbReference type="EMBL" id="AK222218">
    <property type="protein sequence ID" value="BAD95385.1"/>
    <property type="molecule type" value="mRNA"/>
</dbReference>
<dbReference type="EMBL" id="AK229759">
    <property type="protein sequence ID" value="BAF01595.1"/>
    <property type="molecule type" value="mRNA"/>
</dbReference>
<dbReference type="EMBL" id="AK229844">
    <property type="protein sequence ID" value="BAF01673.1"/>
    <property type="molecule type" value="mRNA"/>
</dbReference>
<dbReference type="EMBL" id="AK230435">
    <property type="protein sequence ID" value="BAF02233.1"/>
    <property type="molecule type" value="mRNA"/>
</dbReference>
<dbReference type="PIR" id="C84709">
    <property type="entry name" value="C84709"/>
</dbReference>
<dbReference type="PIR" id="D84709">
    <property type="entry name" value="D84709"/>
</dbReference>
<dbReference type="RefSeq" id="NP_001031446.1">
    <property type="nucleotide sequence ID" value="NM_001036369.2"/>
</dbReference>
<dbReference type="RefSeq" id="NP_001077982.1">
    <property type="nucleotide sequence ID" value="NM_001084513.2"/>
</dbReference>
<dbReference type="RefSeq" id="NP_850147.1">
    <molecule id="Q682S0-1"/>
    <property type="nucleotide sequence ID" value="NM_179816.3"/>
</dbReference>
<dbReference type="SMR" id="Q682S0"/>
<dbReference type="BioGRID" id="2950">
    <property type="interactions" value="7"/>
</dbReference>
<dbReference type="FunCoup" id="Q682S0">
    <property type="interactions" value="105"/>
</dbReference>
<dbReference type="IntAct" id="Q682S0">
    <property type="interactions" value="3"/>
</dbReference>
<dbReference type="MINT" id="Q682S0"/>
<dbReference type="STRING" id="3702.Q682S0"/>
<dbReference type="iPTMnet" id="Q682S0"/>
<dbReference type="MetOSite" id="Q682S0"/>
<dbReference type="PaxDb" id="3702-AT2G30520.1"/>
<dbReference type="ProteomicsDB" id="226743">
    <molecule id="Q682S0-1"/>
</dbReference>
<dbReference type="EnsemblPlants" id="AT2G30520.1">
    <molecule id="Q682S0-1"/>
    <property type="protein sequence ID" value="AT2G30520.1"/>
    <property type="gene ID" value="AT2G30520"/>
</dbReference>
<dbReference type="GeneID" id="817601"/>
<dbReference type="Gramene" id="AT2G30520.1">
    <molecule id="Q682S0-1"/>
    <property type="protein sequence ID" value="AT2G30520.1"/>
    <property type="gene ID" value="AT2G30520"/>
</dbReference>
<dbReference type="KEGG" id="ath:AT2G30520"/>
<dbReference type="Araport" id="AT2G30520"/>
<dbReference type="TAIR" id="AT2G30520">
    <property type="gene designation" value="RPT2"/>
</dbReference>
<dbReference type="eggNOG" id="ENOG502QUJB">
    <property type="taxonomic scope" value="Eukaryota"/>
</dbReference>
<dbReference type="HOGENOM" id="CLU_005994_6_0_1"/>
<dbReference type="InParanoid" id="Q682S0"/>
<dbReference type="OMA" id="KMKMYIA"/>
<dbReference type="PhylomeDB" id="Q682S0"/>
<dbReference type="UniPathway" id="UPA00143"/>
<dbReference type="PRO" id="PR:Q682S0"/>
<dbReference type="Proteomes" id="UP000006548">
    <property type="component" value="Chromosome 2"/>
</dbReference>
<dbReference type="ExpressionAtlas" id="Q682S0">
    <property type="expression patterns" value="baseline and differential"/>
</dbReference>
<dbReference type="GO" id="GO:0005737">
    <property type="term" value="C:cytoplasm"/>
    <property type="evidence" value="ECO:0000314"/>
    <property type="project" value="TAIR"/>
</dbReference>
<dbReference type="GO" id="GO:0005634">
    <property type="term" value="C:nucleus"/>
    <property type="evidence" value="ECO:0000314"/>
    <property type="project" value="TAIR"/>
</dbReference>
<dbReference type="GO" id="GO:0005777">
    <property type="term" value="C:peroxisome"/>
    <property type="evidence" value="ECO:0007005"/>
    <property type="project" value="TAIR"/>
</dbReference>
<dbReference type="GO" id="GO:0009904">
    <property type="term" value="P:chloroplast accumulation movement"/>
    <property type="evidence" value="ECO:0000315"/>
    <property type="project" value="TAIR"/>
</dbReference>
<dbReference type="GO" id="GO:0009638">
    <property type="term" value="P:phototropism"/>
    <property type="evidence" value="ECO:0000315"/>
    <property type="project" value="TAIR"/>
</dbReference>
<dbReference type="GO" id="GO:0016567">
    <property type="term" value="P:protein ubiquitination"/>
    <property type="evidence" value="ECO:0007669"/>
    <property type="project" value="UniProtKB-UniPathway"/>
</dbReference>
<dbReference type="GO" id="GO:0007165">
    <property type="term" value="P:signal transduction"/>
    <property type="evidence" value="ECO:0007669"/>
    <property type="project" value="UniProtKB-KW"/>
</dbReference>
<dbReference type="FunFam" id="3.30.710.10:FF:000168">
    <property type="entry name" value="BTB/POZ domain-containing protein At1g03010"/>
    <property type="match status" value="1"/>
</dbReference>
<dbReference type="Gene3D" id="3.30.710.10">
    <property type="entry name" value="Potassium Channel Kv1.1, Chain A"/>
    <property type="match status" value="1"/>
</dbReference>
<dbReference type="InterPro" id="IPR000210">
    <property type="entry name" value="BTB/POZ_dom"/>
</dbReference>
<dbReference type="InterPro" id="IPR043454">
    <property type="entry name" value="NPH3/RPT2-like"/>
</dbReference>
<dbReference type="InterPro" id="IPR027356">
    <property type="entry name" value="NPH3_dom"/>
</dbReference>
<dbReference type="InterPro" id="IPR011333">
    <property type="entry name" value="SKP1/BTB/POZ_sf"/>
</dbReference>
<dbReference type="PANTHER" id="PTHR32370">
    <property type="entry name" value="OS12G0117600 PROTEIN"/>
    <property type="match status" value="1"/>
</dbReference>
<dbReference type="Pfam" id="PF00651">
    <property type="entry name" value="BTB"/>
    <property type="match status" value="1"/>
</dbReference>
<dbReference type="Pfam" id="PF03000">
    <property type="entry name" value="NPH3"/>
    <property type="match status" value="1"/>
</dbReference>
<dbReference type="SMART" id="SM00225">
    <property type="entry name" value="BTB"/>
    <property type="match status" value="1"/>
</dbReference>
<dbReference type="SUPFAM" id="SSF54695">
    <property type="entry name" value="POZ domain"/>
    <property type="match status" value="1"/>
</dbReference>
<dbReference type="PROSITE" id="PS50097">
    <property type="entry name" value="BTB"/>
    <property type="match status" value="1"/>
</dbReference>
<dbReference type="PROSITE" id="PS51649">
    <property type="entry name" value="NPH3"/>
    <property type="match status" value="1"/>
</dbReference>
<feature type="chain" id="PRO_0000097438" description="Root phototropism protein 2">
    <location>
        <begin position="1"/>
        <end position="593"/>
    </location>
</feature>
<feature type="domain" description="BTB" evidence="3">
    <location>
        <begin position="32"/>
        <end position="100"/>
    </location>
</feature>
<feature type="domain" description="NPH3" evidence="4">
    <location>
        <begin position="187"/>
        <end position="469"/>
    </location>
</feature>
<feature type="modified residue" description="Phosphotyrosine" evidence="2">
    <location>
        <position position="410"/>
    </location>
</feature>
<feature type="sequence conflict" description="In Ref. 1; AAF33112." evidence="9" ref="1">
    <original>Y</original>
    <variation>F</variation>
    <location>
        <position position="244"/>
    </location>
</feature>
<feature type="sequence conflict" description="In Ref. 1; AAF33112." evidence="9" ref="1">
    <original>K</original>
    <variation>R</variation>
    <location>
        <position position="555"/>
    </location>
</feature>
<comment type="function">
    <text evidence="1 5 6 8">May act as a substrate-specific adapter of an E3 ubiquitin-protein ligase complex (CUL3-RBX1-BTB) which mediates the ubiquitination and subsequent proteasomal degradation of target proteins (By similarity). Signal transducer of the phototropic response and photo-induced movements. Necessary for root phototropism. Involved in hypocotyl phototropism under high rate but not under low rate light. Regulates stomata opening. Seems to be not involved in chloroplast accumulation and translocation.</text>
</comment>
<comment type="pathway">
    <text>Protein modification; protein ubiquitination.</text>
</comment>
<comment type="subunit">
    <text evidence="6">Interacts with RPT3 and PHOT1.</text>
</comment>
<comment type="alternative products">
    <event type="alternative splicing"/>
    <isoform>
        <id>Q682S0-1</id>
        <name>1</name>
        <sequence type="displayed"/>
    </isoform>
    <text>A number of isoforms are produced. According to EST sequences.</text>
</comment>
<comment type="tissue specificity">
    <text evidence="6">Expressed in hypocotyls, guard cells and mesophyll cells.</text>
</comment>
<comment type="induction">
    <text evidence="5 8">Light fluence rate-dependent induction, independent of light quality. Up-regulated by blue light treatment.</text>
</comment>
<comment type="domain">
    <text evidence="7">The BTB/POZ domain mediates the interaction with some component of ubiquitin ligase complexes.</text>
</comment>
<comment type="similarity">
    <text evidence="4">Belongs to the NPH3 family.</text>
</comment>
<comment type="sequence caution" evidence="9">
    <conflict type="erroneous gene model prediction">
        <sequence resource="EMBL-CDS" id="AAB63085"/>
    </conflict>
    <text>Was originally thought to correspond to two different genes At2g30510 and At2g30520.</text>
</comment>
<comment type="sequence caution" evidence="9">
    <conflict type="erroneous gene model prediction">
        <sequence resource="EMBL-CDS" id="AAB63086"/>
    </conflict>
    <text>Was originally thought to correspond to two different genes At2g30510 and At2g30520.</text>
</comment>
<comment type="sequence caution" evidence="9">
    <conflict type="frameshift">
        <sequence resource="EMBL-CDS" id="BAD43060"/>
    </conflict>
</comment>